<dbReference type="EMBL" id="AE004437">
    <property type="protein sequence ID" value="AAG19950.1"/>
    <property type="molecule type" value="Genomic_DNA"/>
</dbReference>
<dbReference type="PIR" id="B84323">
    <property type="entry name" value="B84323"/>
</dbReference>
<dbReference type="RefSeq" id="WP_010903248.1">
    <property type="nucleotide sequence ID" value="NC_002607.1"/>
</dbReference>
<dbReference type="SMR" id="Q9HPC0"/>
<dbReference type="FunCoup" id="Q9HPC0">
    <property type="interactions" value="107"/>
</dbReference>
<dbReference type="STRING" id="64091.VNG_1706G"/>
<dbReference type="PaxDb" id="64091-VNG_1706G"/>
<dbReference type="KEGG" id="hal:VNG_1706G"/>
<dbReference type="PATRIC" id="fig|64091.14.peg.1302"/>
<dbReference type="HOGENOM" id="CLU_177289_2_1_2"/>
<dbReference type="InParanoid" id="Q9HPC0"/>
<dbReference type="OrthoDB" id="5615at2157"/>
<dbReference type="PhylomeDB" id="Q9HPC0"/>
<dbReference type="Proteomes" id="UP000000554">
    <property type="component" value="Chromosome"/>
</dbReference>
<dbReference type="GO" id="GO:0022627">
    <property type="term" value="C:cytosolic small ribosomal subunit"/>
    <property type="evidence" value="ECO:0000318"/>
    <property type="project" value="GO_Central"/>
</dbReference>
<dbReference type="GO" id="GO:0019843">
    <property type="term" value="F:rRNA binding"/>
    <property type="evidence" value="ECO:0007669"/>
    <property type="project" value="UniProtKB-UniRule"/>
</dbReference>
<dbReference type="GO" id="GO:0003735">
    <property type="term" value="F:structural constituent of ribosome"/>
    <property type="evidence" value="ECO:0000318"/>
    <property type="project" value="GO_Central"/>
</dbReference>
<dbReference type="GO" id="GO:0008270">
    <property type="term" value="F:zinc ion binding"/>
    <property type="evidence" value="ECO:0000318"/>
    <property type="project" value="GO_Central"/>
</dbReference>
<dbReference type="GO" id="GO:0002181">
    <property type="term" value="P:cytoplasmic translation"/>
    <property type="evidence" value="ECO:0000318"/>
    <property type="project" value="GO_Central"/>
</dbReference>
<dbReference type="FunFam" id="4.10.830.10:FF:000002">
    <property type="entry name" value="40S ribosomal protein S29"/>
    <property type="match status" value="1"/>
</dbReference>
<dbReference type="Gene3D" id="4.10.830.10">
    <property type="entry name" value="30s Ribosomal Protein S14, Chain N"/>
    <property type="match status" value="1"/>
</dbReference>
<dbReference type="HAMAP" id="MF_01364_A">
    <property type="entry name" value="Ribosomal_uS14_2_A"/>
    <property type="match status" value="1"/>
</dbReference>
<dbReference type="InterPro" id="IPR001209">
    <property type="entry name" value="Ribosomal_uS14"/>
</dbReference>
<dbReference type="InterPro" id="IPR023676">
    <property type="entry name" value="Ribosomal_uS14_arc"/>
</dbReference>
<dbReference type="InterPro" id="IPR018271">
    <property type="entry name" value="Ribosomal_uS14_CS"/>
</dbReference>
<dbReference type="InterPro" id="IPR039744">
    <property type="entry name" value="RIbosomal_uS14_euk_arc"/>
</dbReference>
<dbReference type="InterPro" id="IPR043140">
    <property type="entry name" value="Ribosomal_uS14_sf"/>
</dbReference>
<dbReference type="NCBIfam" id="NF004424">
    <property type="entry name" value="PRK05766.1"/>
    <property type="match status" value="1"/>
</dbReference>
<dbReference type="PANTHER" id="PTHR12010">
    <property type="entry name" value="40S RIBOSOMAL PROTEIN S29"/>
    <property type="match status" value="1"/>
</dbReference>
<dbReference type="PANTHER" id="PTHR12010:SF2">
    <property type="entry name" value="40S RIBOSOMAL PROTEIN S29"/>
    <property type="match status" value="1"/>
</dbReference>
<dbReference type="Pfam" id="PF00253">
    <property type="entry name" value="Ribosomal_S14"/>
    <property type="match status" value="1"/>
</dbReference>
<dbReference type="PROSITE" id="PS00527">
    <property type="entry name" value="RIBOSOMAL_S14"/>
    <property type="match status" value="1"/>
</dbReference>
<accession>Q9HPC0</accession>
<feature type="chain" id="PRO_0000130991" description="Small ribosomal subunit protein uS14">
    <location>
        <begin position="1"/>
        <end position="52"/>
    </location>
</feature>
<feature type="binding site" evidence="1">
    <location>
        <position position="17"/>
    </location>
    <ligand>
        <name>Zn(2+)</name>
        <dbReference type="ChEBI" id="CHEBI:29105"/>
    </ligand>
</feature>
<feature type="binding site" evidence="1">
    <location>
        <position position="20"/>
    </location>
    <ligand>
        <name>Zn(2+)</name>
        <dbReference type="ChEBI" id="CHEBI:29105"/>
    </ligand>
</feature>
<feature type="binding site" evidence="1">
    <location>
        <position position="35"/>
    </location>
    <ligand>
        <name>Zn(2+)</name>
        <dbReference type="ChEBI" id="CHEBI:29105"/>
    </ligand>
</feature>
<feature type="binding site" evidence="1">
    <location>
        <position position="38"/>
    </location>
    <ligand>
        <name>Zn(2+)</name>
        <dbReference type="ChEBI" id="CHEBI:29105"/>
    </ligand>
</feature>
<gene>
    <name evidence="1" type="primary">rps14</name>
    <name type="ordered locus">VNG_1706G</name>
</gene>
<keyword id="KW-0479">Metal-binding</keyword>
<keyword id="KW-1185">Reference proteome</keyword>
<keyword id="KW-0687">Ribonucleoprotein</keyword>
<keyword id="KW-0689">Ribosomal protein</keyword>
<keyword id="KW-0694">RNA-binding</keyword>
<keyword id="KW-0699">rRNA-binding</keyword>
<keyword id="KW-0862">Zinc</keyword>
<sequence>MSETDGEAEETGQTHECRRCGREQGLVGKYDIWLCRQCFREIARSMGFKKYS</sequence>
<protein>
    <recommendedName>
        <fullName evidence="1">Small ribosomal subunit protein uS14</fullName>
    </recommendedName>
    <alternativeName>
        <fullName evidence="2">30S ribosomal protein S14 type Z</fullName>
    </alternativeName>
</protein>
<evidence type="ECO:0000255" key="1">
    <source>
        <dbReference type="HAMAP-Rule" id="MF_01364"/>
    </source>
</evidence>
<evidence type="ECO:0000305" key="2"/>
<organism>
    <name type="scientific">Halobacterium salinarum (strain ATCC 700922 / JCM 11081 / NRC-1)</name>
    <name type="common">Halobacterium halobium</name>
    <dbReference type="NCBI Taxonomy" id="64091"/>
    <lineage>
        <taxon>Archaea</taxon>
        <taxon>Methanobacteriati</taxon>
        <taxon>Methanobacteriota</taxon>
        <taxon>Stenosarchaea group</taxon>
        <taxon>Halobacteria</taxon>
        <taxon>Halobacteriales</taxon>
        <taxon>Halobacteriaceae</taxon>
        <taxon>Halobacterium</taxon>
        <taxon>Halobacterium salinarum NRC-34001</taxon>
    </lineage>
</organism>
<comment type="function">
    <text evidence="1">Binds 16S rRNA, required for the assembly of 30S particles.</text>
</comment>
<comment type="cofactor">
    <cofactor evidence="1">
        <name>Zn(2+)</name>
        <dbReference type="ChEBI" id="CHEBI:29105"/>
    </cofactor>
    <text evidence="1">Binds 1 zinc ion per subunit.</text>
</comment>
<comment type="subunit">
    <text evidence="1">Part of the 30S ribosomal subunit.</text>
</comment>
<comment type="similarity">
    <text evidence="1">Belongs to the universal ribosomal protein uS14 family. Zinc-binding uS14 subfamily.</text>
</comment>
<name>RS14Z_HALSA</name>
<proteinExistence type="inferred from homology"/>
<reference key="1">
    <citation type="journal article" date="2000" name="Proc. Natl. Acad. Sci. U.S.A.">
        <title>Genome sequence of Halobacterium species NRC-1.</title>
        <authorList>
            <person name="Ng W.V."/>
            <person name="Kennedy S.P."/>
            <person name="Mahairas G.G."/>
            <person name="Berquist B."/>
            <person name="Pan M."/>
            <person name="Shukla H.D."/>
            <person name="Lasky S.R."/>
            <person name="Baliga N.S."/>
            <person name="Thorsson V."/>
            <person name="Sbrogna J."/>
            <person name="Swartzell S."/>
            <person name="Weir D."/>
            <person name="Hall J."/>
            <person name="Dahl T.A."/>
            <person name="Welti R."/>
            <person name="Goo Y.A."/>
            <person name="Leithauser B."/>
            <person name="Keller K."/>
            <person name="Cruz R."/>
            <person name="Danson M.J."/>
            <person name="Hough D.W."/>
            <person name="Maddocks D.G."/>
            <person name="Jablonski P.E."/>
            <person name="Krebs M.P."/>
            <person name="Angevine C.M."/>
            <person name="Dale H."/>
            <person name="Isenbarger T.A."/>
            <person name="Peck R.F."/>
            <person name="Pohlschroder M."/>
            <person name="Spudich J.L."/>
            <person name="Jung K.-H."/>
            <person name="Alam M."/>
            <person name="Freitas T."/>
            <person name="Hou S."/>
            <person name="Daniels C.J."/>
            <person name="Dennis P.P."/>
            <person name="Omer A.D."/>
            <person name="Ebhardt H."/>
            <person name="Lowe T.M."/>
            <person name="Liang P."/>
            <person name="Riley M."/>
            <person name="Hood L."/>
            <person name="DasSarma S."/>
        </authorList>
    </citation>
    <scope>NUCLEOTIDE SEQUENCE [LARGE SCALE GENOMIC DNA]</scope>
    <source>
        <strain>ATCC 700922 / JCM 11081 / NRC-1</strain>
    </source>
</reference>